<comment type="catalytic activity">
    <reaction evidence="2">
        <text>GTP + H2O = 7,8-dihydroneopterin 3'-triphosphate + formate + H(+)</text>
        <dbReference type="Rhea" id="RHEA:17473"/>
        <dbReference type="ChEBI" id="CHEBI:15377"/>
        <dbReference type="ChEBI" id="CHEBI:15378"/>
        <dbReference type="ChEBI" id="CHEBI:15740"/>
        <dbReference type="ChEBI" id="CHEBI:37565"/>
        <dbReference type="ChEBI" id="CHEBI:58462"/>
        <dbReference type="EC" id="3.5.4.16"/>
    </reaction>
</comment>
<comment type="pathway">
    <text evidence="2">Cofactor biosynthesis; 7,8-dihydroneopterin triphosphate biosynthesis; 7,8-dihydroneopterin triphosphate from GTP: step 1/1.</text>
</comment>
<comment type="subunit">
    <text evidence="1">Toroid-shaped homodecamer, composed of two pentamers of five dimers.</text>
</comment>
<comment type="similarity">
    <text evidence="2">Belongs to the GTP cyclohydrolase I family.</text>
</comment>
<sequence length="222" mass="24831">MPSLSKEAALVHEALVARGLETPLRPPVHEMDNETRKSLIAGHMTEIMQLLNLDLADDSLMETPHRIAKMYVDEIFSGLDYANFPKITLIENKMKVDEMVTVRDITLTSTCEHHFVTIDGKATVAYIPKDSVIGLSKINRIVQFFAQRPQVQERLTQQILIALQTLLGTNNVAVSIDAVHYCVKARGIRDATSATTTTSLGGLFKSSQNTRHEFLRAVRHHN</sequence>
<evidence type="ECO:0000250" key="1"/>
<evidence type="ECO:0000255" key="2">
    <source>
        <dbReference type="HAMAP-Rule" id="MF_00223"/>
    </source>
</evidence>
<accession>Q3Z053</accession>
<organism>
    <name type="scientific">Shigella sonnei (strain Ss046)</name>
    <dbReference type="NCBI Taxonomy" id="300269"/>
    <lineage>
        <taxon>Bacteria</taxon>
        <taxon>Pseudomonadati</taxon>
        <taxon>Pseudomonadota</taxon>
        <taxon>Gammaproteobacteria</taxon>
        <taxon>Enterobacterales</taxon>
        <taxon>Enterobacteriaceae</taxon>
        <taxon>Shigella</taxon>
    </lineage>
</organism>
<proteinExistence type="inferred from homology"/>
<gene>
    <name evidence="2" type="primary">folE</name>
    <name type="ordered locus">SSON_2209</name>
</gene>
<reference key="1">
    <citation type="journal article" date="2005" name="Nucleic Acids Res.">
        <title>Genome dynamics and diversity of Shigella species, the etiologic agents of bacillary dysentery.</title>
        <authorList>
            <person name="Yang F."/>
            <person name="Yang J."/>
            <person name="Zhang X."/>
            <person name="Chen L."/>
            <person name="Jiang Y."/>
            <person name="Yan Y."/>
            <person name="Tang X."/>
            <person name="Wang J."/>
            <person name="Xiong Z."/>
            <person name="Dong J."/>
            <person name="Xue Y."/>
            <person name="Zhu Y."/>
            <person name="Xu X."/>
            <person name="Sun L."/>
            <person name="Chen S."/>
            <person name="Nie H."/>
            <person name="Peng J."/>
            <person name="Xu J."/>
            <person name="Wang Y."/>
            <person name="Yuan Z."/>
            <person name="Wen Y."/>
            <person name="Yao Z."/>
            <person name="Shen Y."/>
            <person name="Qiang B."/>
            <person name="Hou Y."/>
            <person name="Yu J."/>
            <person name="Jin Q."/>
        </authorList>
    </citation>
    <scope>NUCLEOTIDE SEQUENCE [LARGE SCALE GENOMIC DNA]</scope>
    <source>
        <strain>Ss046</strain>
    </source>
</reference>
<keyword id="KW-0342">GTP-binding</keyword>
<keyword id="KW-0378">Hydrolase</keyword>
<keyword id="KW-0479">Metal-binding</keyword>
<keyword id="KW-0547">Nucleotide-binding</keyword>
<keyword id="KW-0554">One-carbon metabolism</keyword>
<keyword id="KW-1185">Reference proteome</keyword>
<keyword id="KW-0862">Zinc</keyword>
<feature type="chain" id="PRO_1000043741" description="GTP cyclohydrolase 1">
    <location>
        <begin position="1"/>
        <end position="222"/>
    </location>
</feature>
<feature type="binding site" evidence="2">
    <location>
        <position position="111"/>
    </location>
    <ligand>
        <name>Zn(2+)</name>
        <dbReference type="ChEBI" id="CHEBI:29105"/>
    </ligand>
</feature>
<feature type="binding site" evidence="2">
    <location>
        <position position="114"/>
    </location>
    <ligand>
        <name>Zn(2+)</name>
        <dbReference type="ChEBI" id="CHEBI:29105"/>
    </ligand>
</feature>
<feature type="binding site" evidence="2">
    <location>
        <position position="182"/>
    </location>
    <ligand>
        <name>Zn(2+)</name>
        <dbReference type="ChEBI" id="CHEBI:29105"/>
    </ligand>
</feature>
<dbReference type="EC" id="3.5.4.16" evidence="2"/>
<dbReference type="EMBL" id="CP000038">
    <property type="protein sequence ID" value="AAZ88859.1"/>
    <property type="molecule type" value="Genomic_DNA"/>
</dbReference>
<dbReference type="RefSeq" id="WP_001139613.1">
    <property type="nucleotide sequence ID" value="NC_007384.1"/>
</dbReference>
<dbReference type="SMR" id="Q3Z053"/>
<dbReference type="GeneID" id="93775029"/>
<dbReference type="KEGG" id="ssn:SSON_2209"/>
<dbReference type="HOGENOM" id="CLU_049768_3_2_6"/>
<dbReference type="UniPathway" id="UPA00848">
    <property type="reaction ID" value="UER00151"/>
</dbReference>
<dbReference type="Proteomes" id="UP000002529">
    <property type="component" value="Chromosome"/>
</dbReference>
<dbReference type="GO" id="GO:0005737">
    <property type="term" value="C:cytoplasm"/>
    <property type="evidence" value="ECO:0007669"/>
    <property type="project" value="TreeGrafter"/>
</dbReference>
<dbReference type="GO" id="GO:0005525">
    <property type="term" value="F:GTP binding"/>
    <property type="evidence" value="ECO:0007669"/>
    <property type="project" value="UniProtKB-KW"/>
</dbReference>
<dbReference type="GO" id="GO:0003934">
    <property type="term" value="F:GTP cyclohydrolase I activity"/>
    <property type="evidence" value="ECO:0007669"/>
    <property type="project" value="UniProtKB-UniRule"/>
</dbReference>
<dbReference type="GO" id="GO:0008270">
    <property type="term" value="F:zinc ion binding"/>
    <property type="evidence" value="ECO:0007669"/>
    <property type="project" value="UniProtKB-UniRule"/>
</dbReference>
<dbReference type="GO" id="GO:0006730">
    <property type="term" value="P:one-carbon metabolic process"/>
    <property type="evidence" value="ECO:0007669"/>
    <property type="project" value="UniProtKB-UniRule"/>
</dbReference>
<dbReference type="GO" id="GO:0006729">
    <property type="term" value="P:tetrahydrobiopterin biosynthetic process"/>
    <property type="evidence" value="ECO:0007669"/>
    <property type="project" value="TreeGrafter"/>
</dbReference>
<dbReference type="GO" id="GO:0046654">
    <property type="term" value="P:tetrahydrofolate biosynthetic process"/>
    <property type="evidence" value="ECO:0007669"/>
    <property type="project" value="UniProtKB-UniRule"/>
</dbReference>
<dbReference type="CDD" id="cd00642">
    <property type="entry name" value="GTP_cyclohydro1"/>
    <property type="match status" value="1"/>
</dbReference>
<dbReference type="FunFam" id="1.10.286.10:FF:000002">
    <property type="entry name" value="GTP cyclohydrolase 1"/>
    <property type="match status" value="1"/>
</dbReference>
<dbReference type="FunFam" id="3.30.1130.10:FF:000001">
    <property type="entry name" value="GTP cyclohydrolase 1"/>
    <property type="match status" value="1"/>
</dbReference>
<dbReference type="Gene3D" id="1.10.286.10">
    <property type="match status" value="1"/>
</dbReference>
<dbReference type="Gene3D" id="3.30.1130.10">
    <property type="match status" value="1"/>
</dbReference>
<dbReference type="HAMAP" id="MF_00223">
    <property type="entry name" value="FolE"/>
    <property type="match status" value="1"/>
</dbReference>
<dbReference type="InterPro" id="IPR043133">
    <property type="entry name" value="GTP-CH-I_C/QueF"/>
</dbReference>
<dbReference type="InterPro" id="IPR043134">
    <property type="entry name" value="GTP-CH-I_N"/>
</dbReference>
<dbReference type="InterPro" id="IPR001474">
    <property type="entry name" value="GTP_CycHdrlase_I"/>
</dbReference>
<dbReference type="InterPro" id="IPR018234">
    <property type="entry name" value="GTP_CycHdrlase_I_CS"/>
</dbReference>
<dbReference type="InterPro" id="IPR020602">
    <property type="entry name" value="GTP_CycHdrlase_I_dom"/>
</dbReference>
<dbReference type="NCBIfam" id="TIGR00063">
    <property type="entry name" value="folE"/>
    <property type="match status" value="1"/>
</dbReference>
<dbReference type="NCBIfam" id="NF006824">
    <property type="entry name" value="PRK09347.1-1"/>
    <property type="match status" value="1"/>
</dbReference>
<dbReference type="NCBIfam" id="NF006826">
    <property type="entry name" value="PRK09347.1-3"/>
    <property type="match status" value="1"/>
</dbReference>
<dbReference type="PANTHER" id="PTHR11109:SF7">
    <property type="entry name" value="GTP CYCLOHYDROLASE 1"/>
    <property type="match status" value="1"/>
</dbReference>
<dbReference type="PANTHER" id="PTHR11109">
    <property type="entry name" value="GTP CYCLOHYDROLASE I"/>
    <property type="match status" value="1"/>
</dbReference>
<dbReference type="Pfam" id="PF01227">
    <property type="entry name" value="GTP_cyclohydroI"/>
    <property type="match status" value="1"/>
</dbReference>
<dbReference type="SUPFAM" id="SSF55620">
    <property type="entry name" value="Tetrahydrobiopterin biosynthesis enzymes-like"/>
    <property type="match status" value="1"/>
</dbReference>
<dbReference type="PROSITE" id="PS00859">
    <property type="entry name" value="GTP_CYCLOHYDROL_1_1"/>
    <property type="match status" value="1"/>
</dbReference>
<dbReference type="PROSITE" id="PS00860">
    <property type="entry name" value="GTP_CYCLOHYDROL_1_2"/>
    <property type="match status" value="1"/>
</dbReference>
<name>GCH1_SHISS</name>
<protein>
    <recommendedName>
        <fullName evidence="2">GTP cyclohydrolase 1</fullName>
        <ecNumber evidence="2">3.5.4.16</ecNumber>
    </recommendedName>
    <alternativeName>
        <fullName evidence="2">GTP cyclohydrolase I</fullName>
        <shortName evidence="2">GTP-CH-I</shortName>
    </alternativeName>
</protein>